<comment type="cofactor">
    <cofactor evidence="1">
        <name>Fe(2+)</name>
        <dbReference type="ChEBI" id="CHEBI:29033"/>
    </cofactor>
    <text evidence="1">Binds 1 Fe(2+) ion per subunit.</text>
</comment>
<comment type="tissue specificity">
    <text evidence="2">Expressed in etiolated seedlings, leaves, stems and flowers.</text>
</comment>
<comment type="similarity">
    <text evidence="3">Belongs to the iron/ascorbate-dependent oxidoreductase family.</text>
</comment>
<comment type="sequence caution" evidence="3">
    <conflict type="erroneous gene model prediction">
        <sequence resource="EMBL-CDS" id="AAF86540"/>
    </conflict>
    <text>The predicted gene At1g03410 has been split into 2 genes: At1g03400 and At1g03410.</text>
</comment>
<comment type="sequence caution" evidence="3">
    <conflict type="erroneous initiation">
        <sequence resource="EMBL-CDS" id="BAE98763"/>
    </conflict>
    <text>Truncated N-terminus.</text>
</comment>
<comment type="sequence caution" evidence="3">
    <conflict type="erroneous initiation">
        <sequence resource="EMBL-CDS" id="CAA58151"/>
    </conflict>
    <text>Truncated N-terminus.</text>
</comment>
<name>ACCH5_ARATH</name>
<organism>
    <name type="scientific">Arabidopsis thaliana</name>
    <name type="common">Mouse-ear cress</name>
    <dbReference type="NCBI Taxonomy" id="3702"/>
    <lineage>
        <taxon>Eukaryota</taxon>
        <taxon>Viridiplantae</taxon>
        <taxon>Streptophyta</taxon>
        <taxon>Embryophyta</taxon>
        <taxon>Tracheophyta</taxon>
        <taxon>Spermatophyta</taxon>
        <taxon>Magnoliopsida</taxon>
        <taxon>eudicotyledons</taxon>
        <taxon>Gunneridae</taxon>
        <taxon>Pentapetalae</taxon>
        <taxon>rosids</taxon>
        <taxon>malvids</taxon>
        <taxon>Brassicales</taxon>
        <taxon>Brassicaceae</taxon>
        <taxon>Camelineae</taxon>
        <taxon>Arabidopsis</taxon>
    </lineage>
</organism>
<keyword id="KW-0408">Iron</keyword>
<keyword id="KW-0479">Metal-binding</keyword>
<keyword id="KW-0560">Oxidoreductase</keyword>
<keyword id="KW-1185">Reference proteome</keyword>
<accession>Q43383</accession>
<accession>Q9LR82</accession>
<proteinExistence type="evidence at transcript level"/>
<evidence type="ECO:0000255" key="1">
    <source>
        <dbReference type="PROSITE-ProRule" id="PRU00805"/>
    </source>
</evidence>
<evidence type="ECO:0000269" key="2">
    <source>
    </source>
</evidence>
<evidence type="ECO:0000305" key="3"/>
<protein>
    <recommendedName>
        <fullName>1-aminocyclopropane-1-carboxylate oxidase homolog 5</fullName>
        <ecNumber>1.14.-.-</ecNumber>
    </recommendedName>
</protein>
<feature type="chain" id="PRO_0000408280" description="1-aminocyclopropane-1-carboxylate oxidase homolog 5">
    <location>
        <begin position="1"/>
        <end position="398"/>
    </location>
</feature>
<feature type="domain" description="Fe2OG dioxygenase" evidence="1">
    <location>
        <begin position="247"/>
        <end position="347"/>
    </location>
</feature>
<feature type="binding site" evidence="1">
    <location>
        <position position="271"/>
    </location>
    <ligand>
        <name>Fe cation</name>
        <dbReference type="ChEBI" id="CHEBI:24875"/>
    </ligand>
</feature>
<feature type="binding site" evidence="1">
    <location>
        <position position="273"/>
    </location>
    <ligand>
        <name>Fe cation</name>
        <dbReference type="ChEBI" id="CHEBI:24875"/>
    </ligand>
</feature>
<feature type="binding site" evidence="1">
    <location>
        <position position="327"/>
    </location>
    <ligand>
        <name>Fe cation</name>
        <dbReference type="ChEBI" id="CHEBI:24875"/>
    </ligand>
</feature>
<feature type="binding site" evidence="1">
    <location>
        <position position="338"/>
    </location>
    <ligand>
        <name>2-oxoglutarate</name>
        <dbReference type="ChEBI" id="CHEBI:16810"/>
    </ligand>
</feature>
<reference key="1">
    <citation type="journal article" date="2000" name="Nature">
        <title>Sequence and analysis of chromosome 1 of the plant Arabidopsis thaliana.</title>
        <authorList>
            <person name="Theologis A."/>
            <person name="Ecker J.R."/>
            <person name="Palm C.J."/>
            <person name="Federspiel N.A."/>
            <person name="Kaul S."/>
            <person name="White O."/>
            <person name="Alonso J."/>
            <person name="Altafi H."/>
            <person name="Araujo R."/>
            <person name="Bowman C.L."/>
            <person name="Brooks S.Y."/>
            <person name="Buehler E."/>
            <person name="Chan A."/>
            <person name="Chao Q."/>
            <person name="Chen H."/>
            <person name="Cheuk R.F."/>
            <person name="Chin C.W."/>
            <person name="Chung M.K."/>
            <person name="Conn L."/>
            <person name="Conway A.B."/>
            <person name="Conway A.R."/>
            <person name="Creasy T.H."/>
            <person name="Dewar K."/>
            <person name="Dunn P."/>
            <person name="Etgu P."/>
            <person name="Feldblyum T.V."/>
            <person name="Feng J.-D."/>
            <person name="Fong B."/>
            <person name="Fujii C.Y."/>
            <person name="Gill J.E."/>
            <person name="Goldsmith A.D."/>
            <person name="Haas B."/>
            <person name="Hansen N.F."/>
            <person name="Hughes B."/>
            <person name="Huizar L."/>
            <person name="Hunter J.L."/>
            <person name="Jenkins J."/>
            <person name="Johnson-Hopson C."/>
            <person name="Khan S."/>
            <person name="Khaykin E."/>
            <person name="Kim C.J."/>
            <person name="Koo H.L."/>
            <person name="Kremenetskaia I."/>
            <person name="Kurtz D.B."/>
            <person name="Kwan A."/>
            <person name="Lam B."/>
            <person name="Langin-Hooper S."/>
            <person name="Lee A."/>
            <person name="Lee J.M."/>
            <person name="Lenz C.A."/>
            <person name="Li J.H."/>
            <person name="Li Y.-P."/>
            <person name="Lin X."/>
            <person name="Liu S.X."/>
            <person name="Liu Z.A."/>
            <person name="Luros J.S."/>
            <person name="Maiti R."/>
            <person name="Marziali A."/>
            <person name="Militscher J."/>
            <person name="Miranda M."/>
            <person name="Nguyen M."/>
            <person name="Nierman W.C."/>
            <person name="Osborne B.I."/>
            <person name="Pai G."/>
            <person name="Peterson J."/>
            <person name="Pham P.K."/>
            <person name="Rizzo M."/>
            <person name="Rooney T."/>
            <person name="Rowley D."/>
            <person name="Sakano H."/>
            <person name="Salzberg S.L."/>
            <person name="Schwartz J.R."/>
            <person name="Shinn P."/>
            <person name="Southwick A.M."/>
            <person name="Sun H."/>
            <person name="Tallon L.J."/>
            <person name="Tambunga G."/>
            <person name="Toriumi M.J."/>
            <person name="Town C.D."/>
            <person name="Utterback T."/>
            <person name="Van Aken S."/>
            <person name="Vaysberg M."/>
            <person name="Vysotskaia V.S."/>
            <person name="Walker M."/>
            <person name="Wu D."/>
            <person name="Yu G."/>
            <person name="Fraser C.M."/>
            <person name="Venter J.C."/>
            <person name="Davis R.W."/>
        </authorList>
    </citation>
    <scope>NUCLEOTIDE SEQUENCE [LARGE SCALE GENOMIC DNA]</scope>
    <source>
        <strain>cv. Columbia</strain>
    </source>
</reference>
<reference key="2">
    <citation type="journal article" date="2017" name="Plant J.">
        <title>Araport11: a complete reannotation of the Arabidopsis thaliana reference genome.</title>
        <authorList>
            <person name="Cheng C.Y."/>
            <person name="Krishnakumar V."/>
            <person name="Chan A.P."/>
            <person name="Thibaud-Nissen F."/>
            <person name="Schobel S."/>
            <person name="Town C.D."/>
        </authorList>
    </citation>
    <scope>GENOME REANNOTATION</scope>
    <source>
        <strain>cv. Columbia</strain>
    </source>
</reference>
<reference key="3">
    <citation type="submission" date="2006-07" db="EMBL/GenBank/DDBJ databases">
        <title>Large-scale analysis of RIKEN Arabidopsis full-length (RAFL) cDNAs.</title>
        <authorList>
            <person name="Totoki Y."/>
            <person name="Seki M."/>
            <person name="Ishida J."/>
            <person name="Nakajima M."/>
            <person name="Enju A."/>
            <person name="Kamiya A."/>
            <person name="Narusaka M."/>
            <person name="Shin-i T."/>
            <person name="Nakagawa M."/>
            <person name="Sakamoto N."/>
            <person name="Oishi K."/>
            <person name="Kohara Y."/>
            <person name="Kobayashi M."/>
            <person name="Toyoda A."/>
            <person name="Sakaki Y."/>
            <person name="Sakurai T."/>
            <person name="Iida K."/>
            <person name="Akiyama K."/>
            <person name="Satou M."/>
            <person name="Toyoda T."/>
            <person name="Konagaya A."/>
            <person name="Carninci P."/>
            <person name="Kawai J."/>
            <person name="Hayashizaki Y."/>
            <person name="Shinozaki K."/>
        </authorList>
    </citation>
    <scope>NUCLEOTIDE SEQUENCE [LARGE SCALE MRNA]</scope>
    <source>
        <strain>cv. Columbia</strain>
    </source>
</reference>
<reference key="4">
    <citation type="journal article" date="1995" name="Plant Mol. Biol.">
        <title>Analysis of Arabidopsis cDNA that shows homology to the tomato E8 cDNA.</title>
        <authorList>
            <person name="Trentmann S.M."/>
            <person name="Kende H."/>
        </authorList>
    </citation>
    <scope>NUCLEOTIDE SEQUENCE [MRNA] OF 35-398</scope>
    <scope>TISSUE SPECIFICITY</scope>
    <source>
        <strain>cv. Columbia</strain>
        <tissue>Etiolated seedling</tissue>
    </source>
</reference>
<dbReference type="EC" id="1.14.-.-"/>
<dbReference type="EMBL" id="AC002560">
    <property type="protein sequence ID" value="AAF86540.1"/>
    <property type="status" value="ALT_SEQ"/>
    <property type="molecule type" value="Genomic_DNA"/>
</dbReference>
<dbReference type="EMBL" id="CP002684">
    <property type="protein sequence ID" value="AEE27569.1"/>
    <property type="molecule type" value="Genomic_DNA"/>
</dbReference>
<dbReference type="EMBL" id="AK226654">
    <property type="protein sequence ID" value="BAE98763.1"/>
    <property type="status" value="ALT_INIT"/>
    <property type="molecule type" value="mRNA"/>
</dbReference>
<dbReference type="EMBL" id="X83096">
    <property type="protein sequence ID" value="CAA58151.1"/>
    <property type="status" value="ALT_INIT"/>
    <property type="molecule type" value="mRNA"/>
</dbReference>
<dbReference type="PIR" id="S59548">
    <property type="entry name" value="S59548"/>
</dbReference>
<dbReference type="RefSeq" id="NP_001323192.1">
    <property type="nucleotide sequence ID" value="NM_001331410.1"/>
</dbReference>
<dbReference type="RefSeq" id="NP_171840.2">
    <property type="nucleotide sequence ID" value="NM_100223.3"/>
</dbReference>
<dbReference type="SMR" id="Q43383"/>
<dbReference type="FunCoup" id="Q43383">
    <property type="interactions" value="4"/>
</dbReference>
<dbReference type="STRING" id="3702.Q43383"/>
<dbReference type="PaxDb" id="3702-AT1G03410.1"/>
<dbReference type="ProteomicsDB" id="244356"/>
<dbReference type="EnsemblPlants" id="AT1G03410.1">
    <property type="protein sequence ID" value="AT1G03410.1"/>
    <property type="gene ID" value="AT1G03410"/>
</dbReference>
<dbReference type="GeneID" id="838763"/>
<dbReference type="Gramene" id="AT1G03410.1">
    <property type="protein sequence ID" value="AT1G03410.1"/>
    <property type="gene ID" value="AT1G03410"/>
</dbReference>
<dbReference type="KEGG" id="ath:AT1G03410"/>
<dbReference type="Araport" id="AT1G03410"/>
<dbReference type="TAIR" id="AT1G03410">
    <property type="gene designation" value="2A6"/>
</dbReference>
<dbReference type="eggNOG" id="KOG0143">
    <property type="taxonomic scope" value="Eukaryota"/>
</dbReference>
<dbReference type="HOGENOM" id="CLU_010119_0_0_1"/>
<dbReference type="InParanoid" id="Q43383"/>
<dbReference type="PRO" id="PR:Q43383"/>
<dbReference type="Proteomes" id="UP000006548">
    <property type="component" value="Chromosome 1"/>
</dbReference>
<dbReference type="ExpressionAtlas" id="Q43383">
    <property type="expression patterns" value="baseline and differential"/>
</dbReference>
<dbReference type="GO" id="GO:0051213">
    <property type="term" value="F:dioxygenase activity"/>
    <property type="evidence" value="ECO:0007669"/>
    <property type="project" value="UniProtKB-ARBA"/>
</dbReference>
<dbReference type="GO" id="GO:0046872">
    <property type="term" value="F:metal ion binding"/>
    <property type="evidence" value="ECO:0007669"/>
    <property type="project" value="UniProtKB-KW"/>
</dbReference>
<dbReference type="GO" id="GO:0009058">
    <property type="term" value="P:biosynthetic process"/>
    <property type="evidence" value="ECO:0007669"/>
    <property type="project" value="UniProtKB-ARBA"/>
</dbReference>
<dbReference type="FunFam" id="2.60.120.330:FF:000005">
    <property type="entry name" value="1-aminocyclopropane-1-carboxylate oxidase homolog 1"/>
    <property type="match status" value="1"/>
</dbReference>
<dbReference type="Gene3D" id="2.60.120.330">
    <property type="entry name" value="B-lactam Antibiotic, Isopenicillin N Synthase, Chain"/>
    <property type="match status" value="1"/>
</dbReference>
<dbReference type="InterPro" id="IPR026992">
    <property type="entry name" value="DIOX_N"/>
</dbReference>
<dbReference type="InterPro" id="IPR044861">
    <property type="entry name" value="IPNS-like_FE2OG_OXY"/>
</dbReference>
<dbReference type="InterPro" id="IPR027443">
    <property type="entry name" value="IPNS-like_sf"/>
</dbReference>
<dbReference type="InterPro" id="IPR005123">
    <property type="entry name" value="Oxoglu/Fe-dep_dioxygenase_dom"/>
</dbReference>
<dbReference type="PANTHER" id="PTHR10209:SF742">
    <property type="entry name" value="1-AMINOCYCLOPROPANE-1-CARBOXYLATE OXIDASE HOMOLOG 4-RELATED"/>
    <property type="match status" value="1"/>
</dbReference>
<dbReference type="PANTHER" id="PTHR10209">
    <property type="entry name" value="OXIDOREDUCTASE, 2OG-FE II OXYGENASE FAMILY PROTEIN"/>
    <property type="match status" value="1"/>
</dbReference>
<dbReference type="Pfam" id="PF03171">
    <property type="entry name" value="2OG-FeII_Oxy"/>
    <property type="match status" value="1"/>
</dbReference>
<dbReference type="Pfam" id="PF14226">
    <property type="entry name" value="DIOX_N"/>
    <property type="match status" value="1"/>
</dbReference>
<dbReference type="SUPFAM" id="SSF51197">
    <property type="entry name" value="Clavaminate synthase-like"/>
    <property type="match status" value="1"/>
</dbReference>
<dbReference type="PROSITE" id="PS51471">
    <property type="entry name" value="FE2OG_OXY"/>
    <property type="match status" value="1"/>
</dbReference>
<sequence>MGHDSFCYLIVLRCALRCGIIALMQICALQKKERRSKMESSDRSSQAKAFDETKTGVKGLVASGIKEIPAMFHTPPDTLTSLKQTAPPSQQLTIPTVDLKGGSMDLISRRSVVEKIGDAAERWGFFQVVNHGISVEVMERMKEGIRRFHEQDPEVKKRFYSRDHTRDVLYYSNIDLHTCNKAANWRDTLACYMAPDPPKLQDLPAVCGEIMMEYSKQLMTLGEFLFELLSEALGLNPNHLKDMGCAKSHIMFGQYYPPCPQPDLTLGISKHTDFSFITILLQDNIGGLQVIHDQCWVDVSPVPGALVINIGDLLQLISNDKFISAEHRVIANGSSEPRISMPCFVSTFMKPNPRIYGPIKELLSEQNPAKYRDLTITEFSNTFRSQTISHPALHHFRI</sequence>
<gene>
    <name type="primary">2A6</name>
    <name type="ordered locus">At1g03410</name>
    <name type="ORF">F21B7.3</name>
</gene>